<proteinExistence type="inferred from homology"/>
<reference key="1">
    <citation type="journal article" date="1996" name="Curr. Genet.">
        <title>The 3-phosphoglycerate kinase gene of the yeast Yarrowia lipolytica de-represses on gluconeogenic substrates.</title>
        <authorList>
            <person name="le Dall M.-T."/>
            <person name="Nicaud J.-M."/>
            <person name="Treton B.Y."/>
            <person name="Gaillardin C.M."/>
        </authorList>
    </citation>
    <scope>NUCLEOTIDE SEQUENCE [GENOMIC DNA]</scope>
    <source>
        <strain>ATCC 20460 / W29 / CBS 7504 / IFP29</strain>
    </source>
</reference>
<reference key="2">
    <citation type="journal article" date="2004" name="Nature">
        <title>Genome evolution in yeasts.</title>
        <authorList>
            <person name="Dujon B."/>
            <person name="Sherman D."/>
            <person name="Fischer G."/>
            <person name="Durrens P."/>
            <person name="Casaregola S."/>
            <person name="Lafontaine I."/>
            <person name="de Montigny J."/>
            <person name="Marck C."/>
            <person name="Neuveglise C."/>
            <person name="Talla E."/>
            <person name="Goffard N."/>
            <person name="Frangeul L."/>
            <person name="Aigle M."/>
            <person name="Anthouard V."/>
            <person name="Babour A."/>
            <person name="Barbe V."/>
            <person name="Barnay S."/>
            <person name="Blanchin S."/>
            <person name="Beckerich J.-M."/>
            <person name="Beyne E."/>
            <person name="Bleykasten C."/>
            <person name="Boisrame A."/>
            <person name="Boyer J."/>
            <person name="Cattolico L."/>
            <person name="Confanioleri F."/>
            <person name="de Daruvar A."/>
            <person name="Despons L."/>
            <person name="Fabre E."/>
            <person name="Fairhead C."/>
            <person name="Ferry-Dumazet H."/>
            <person name="Groppi A."/>
            <person name="Hantraye F."/>
            <person name="Hennequin C."/>
            <person name="Jauniaux N."/>
            <person name="Joyet P."/>
            <person name="Kachouri R."/>
            <person name="Kerrest A."/>
            <person name="Koszul R."/>
            <person name="Lemaire M."/>
            <person name="Lesur I."/>
            <person name="Ma L."/>
            <person name="Muller H."/>
            <person name="Nicaud J.-M."/>
            <person name="Nikolski M."/>
            <person name="Oztas S."/>
            <person name="Ozier-Kalogeropoulos O."/>
            <person name="Pellenz S."/>
            <person name="Potier S."/>
            <person name="Richard G.-F."/>
            <person name="Straub M.-L."/>
            <person name="Suleau A."/>
            <person name="Swennen D."/>
            <person name="Tekaia F."/>
            <person name="Wesolowski-Louvel M."/>
            <person name="Westhof E."/>
            <person name="Wirth B."/>
            <person name="Zeniou-Meyer M."/>
            <person name="Zivanovic Y."/>
            <person name="Bolotin-Fukuhara M."/>
            <person name="Thierry A."/>
            <person name="Bouchier C."/>
            <person name="Caudron B."/>
            <person name="Scarpelli C."/>
            <person name="Gaillardin C."/>
            <person name="Weissenbach J."/>
            <person name="Wincker P."/>
            <person name="Souciet J.-L."/>
        </authorList>
    </citation>
    <scope>NUCLEOTIDE SEQUENCE [LARGE SCALE GENOMIC DNA]</scope>
    <source>
        <strain>CLIB 122 / E 150</strain>
    </source>
</reference>
<evidence type="ECO:0000250" key="1"/>
<evidence type="ECO:0000250" key="2">
    <source>
        <dbReference type="UniProtKB" id="A0A7G5KET3"/>
    </source>
</evidence>
<evidence type="ECO:0000250" key="3">
    <source>
        <dbReference type="UniProtKB" id="P00558"/>
    </source>
</evidence>
<evidence type="ECO:0000250" key="4">
    <source>
        <dbReference type="UniProtKB" id="P00560"/>
    </source>
</evidence>
<evidence type="ECO:0000250" key="5">
    <source>
        <dbReference type="UniProtKB" id="Q7SIB7"/>
    </source>
</evidence>
<evidence type="ECO:0000305" key="6"/>
<name>PGK_YARLI</name>
<comment type="function">
    <text evidence="2 3 4">Catalyzes one of the two ATP producing reactions in the glycolytic pathway via the reversible conversion of 1,3-diphosphoglycerate to 3-phosphoglycerate (By similarity). Both L- and D- forms of purine and pyrimidine nucleotides can be used as substrates, but the activity is much lower on pyrimidines (By similarity). Negatively regulates the biosynthesis of acetyl-CoA from pyruvate in the mitochondrion (By similarity).</text>
</comment>
<comment type="catalytic activity">
    <reaction evidence="4">
        <text>(2R)-3-phosphoglycerate + ATP = (2R)-3-phospho-glyceroyl phosphate + ADP</text>
        <dbReference type="Rhea" id="RHEA:14801"/>
        <dbReference type="ChEBI" id="CHEBI:30616"/>
        <dbReference type="ChEBI" id="CHEBI:57604"/>
        <dbReference type="ChEBI" id="CHEBI:58272"/>
        <dbReference type="ChEBI" id="CHEBI:456216"/>
        <dbReference type="EC" id="2.7.2.3"/>
    </reaction>
</comment>
<comment type="cofactor">
    <cofactor evidence="3">
        <name>Mg(2+)</name>
        <dbReference type="ChEBI" id="CHEBI:18420"/>
    </cofactor>
</comment>
<comment type="pathway">
    <text evidence="4">Carbohydrate degradation; glycolysis; pyruvate from D-glyceraldehyde 3-phosphate: step 2/5.</text>
</comment>
<comment type="subunit">
    <text evidence="1">Monomer.</text>
</comment>
<comment type="subcellular location">
    <subcellularLocation>
        <location evidence="4">Cytoplasm</location>
    </subcellularLocation>
    <subcellularLocation>
        <location evidence="4">Mitochondrion</location>
    </subcellularLocation>
</comment>
<comment type="similarity">
    <text evidence="6">Belongs to the phosphoglycerate kinase family.</text>
</comment>
<dbReference type="EC" id="2.7.2.3" evidence="4"/>
<dbReference type="EMBL" id="M91598">
    <property type="protein sequence ID" value="AAC37504.1"/>
    <property type="molecule type" value="Genomic_DNA"/>
</dbReference>
<dbReference type="EMBL" id="CR382130">
    <property type="protein sequence ID" value="CAG80930.1"/>
    <property type="molecule type" value="Genomic_DNA"/>
</dbReference>
<dbReference type="PIR" id="S68151">
    <property type="entry name" value="S68151"/>
</dbReference>
<dbReference type="RefSeq" id="XP_502742.1">
    <property type="nucleotide sequence ID" value="XM_502742.1"/>
</dbReference>
<dbReference type="SMR" id="P29407"/>
<dbReference type="FunCoup" id="P29407">
    <property type="interactions" value="772"/>
</dbReference>
<dbReference type="STRING" id="284591.P29407"/>
<dbReference type="InParanoid" id="P29407"/>
<dbReference type="OrthoDB" id="112797at4891"/>
<dbReference type="UniPathway" id="UPA00109">
    <property type="reaction ID" value="UER00185"/>
</dbReference>
<dbReference type="Proteomes" id="UP000001300">
    <property type="component" value="Chromosome D"/>
</dbReference>
<dbReference type="GO" id="GO:0005829">
    <property type="term" value="C:cytosol"/>
    <property type="evidence" value="ECO:0000318"/>
    <property type="project" value="GO_Central"/>
</dbReference>
<dbReference type="GO" id="GO:0005739">
    <property type="term" value="C:mitochondrion"/>
    <property type="evidence" value="ECO:0007669"/>
    <property type="project" value="UniProtKB-SubCell"/>
</dbReference>
<dbReference type="GO" id="GO:0043531">
    <property type="term" value="F:ADP binding"/>
    <property type="evidence" value="ECO:0000318"/>
    <property type="project" value="GO_Central"/>
</dbReference>
<dbReference type="GO" id="GO:0005524">
    <property type="term" value="F:ATP binding"/>
    <property type="evidence" value="ECO:0000318"/>
    <property type="project" value="GO_Central"/>
</dbReference>
<dbReference type="GO" id="GO:0046872">
    <property type="term" value="F:metal ion binding"/>
    <property type="evidence" value="ECO:0007669"/>
    <property type="project" value="UniProtKB-KW"/>
</dbReference>
<dbReference type="GO" id="GO:0004618">
    <property type="term" value="F:phosphoglycerate kinase activity"/>
    <property type="evidence" value="ECO:0000318"/>
    <property type="project" value="GO_Central"/>
</dbReference>
<dbReference type="GO" id="GO:0006094">
    <property type="term" value="P:gluconeogenesis"/>
    <property type="evidence" value="ECO:0000318"/>
    <property type="project" value="GO_Central"/>
</dbReference>
<dbReference type="GO" id="GO:0006096">
    <property type="term" value="P:glycolytic process"/>
    <property type="evidence" value="ECO:0000318"/>
    <property type="project" value="GO_Central"/>
</dbReference>
<dbReference type="CDD" id="cd00318">
    <property type="entry name" value="Phosphoglycerate_kinase"/>
    <property type="match status" value="1"/>
</dbReference>
<dbReference type="FunFam" id="3.40.50.1260:FF:000003">
    <property type="entry name" value="Phosphoglycerate kinase"/>
    <property type="match status" value="1"/>
</dbReference>
<dbReference type="FunFam" id="3.40.50.1260:FF:000019">
    <property type="entry name" value="Phosphoglycerate kinase 1"/>
    <property type="match status" value="1"/>
</dbReference>
<dbReference type="Gene3D" id="3.40.50.1260">
    <property type="entry name" value="Phosphoglycerate kinase, N-terminal domain"/>
    <property type="match status" value="3"/>
</dbReference>
<dbReference type="HAMAP" id="MF_00145">
    <property type="entry name" value="Phosphoglyc_kinase"/>
    <property type="match status" value="1"/>
</dbReference>
<dbReference type="InterPro" id="IPR001576">
    <property type="entry name" value="Phosphoglycerate_kinase"/>
</dbReference>
<dbReference type="InterPro" id="IPR015911">
    <property type="entry name" value="Phosphoglycerate_kinase_CS"/>
</dbReference>
<dbReference type="InterPro" id="IPR015824">
    <property type="entry name" value="Phosphoglycerate_kinase_N"/>
</dbReference>
<dbReference type="InterPro" id="IPR036043">
    <property type="entry name" value="Phosphoglycerate_kinase_sf"/>
</dbReference>
<dbReference type="PANTHER" id="PTHR11406">
    <property type="entry name" value="PHOSPHOGLYCERATE KINASE"/>
    <property type="match status" value="1"/>
</dbReference>
<dbReference type="PANTHER" id="PTHR11406:SF0">
    <property type="entry name" value="PHOSPHOGLYCERATE KINASE"/>
    <property type="match status" value="1"/>
</dbReference>
<dbReference type="Pfam" id="PF00162">
    <property type="entry name" value="PGK"/>
    <property type="match status" value="1"/>
</dbReference>
<dbReference type="PIRSF" id="PIRSF000724">
    <property type="entry name" value="Pgk"/>
    <property type="match status" value="1"/>
</dbReference>
<dbReference type="PRINTS" id="PR00477">
    <property type="entry name" value="PHGLYCKINASE"/>
</dbReference>
<dbReference type="SUPFAM" id="SSF53748">
    <property type="entry name" value="Phosphoglycerate kinase"/>
    <property type="match status" value="1"/>
</dbReference>
<dbReference type="PROSITE" id="PS00111">
    <property type="entry name" value="PGLYCERATE_KINASE"/>
    <property type="match status" value="1"/>
</dbReference>
<organism>
    <name type="scientific">Yarrowia lipolytica (strain CLIB 122 / E 150)</name>
    <name type="common">Yeast</name>
    <name type="synonym">Candida lipolytica</name>
    <dbReference type="NCBI Taxonomy" id="284591"/>
    <lineage>
        <taxon>Eukaryota</taxon>
        <taxon>Fungi</taxon>
        <taxon>Dikarya</taxon>
        <taxon>Ascomycota</taxon>
        <taxon>Saccharomycotina</taxon>
        <taxon>Dipodascomycetes</taxon>
        <taxon>Dipodascales</taxon>
        <taxon>Dipodascales incertae sedis</taxon>
        <taxon>Yarrowia</taxon>
    </lineage>
</organism>
<protein>
    <recommendedName>
        <fullName>Phosphoglycerate kinase</fullName>
        <ecNumber evidence="4">2.7.2.3</ecNumber>
    </recommendedName>
</protein>
<accession>P29407</accession>
<accession>Q6C9C0</accession>
<keyword id="KW-0067">ATP-binding</keyword>
<keyword id="KW-0963">Cytoplasm</keyword>
<keyword id="KW-0324">Glycolysis</keyword>
<keyword id="KW-0418">Kinase</keyword>
<keyword id="KW-0460">Magnesium</keyword>
<keyword id="KW-0479">Metal-binding</keyword>
<keyword id="KW-0496">Mitochondrion</keyword>
<keyword id="KW-0547">Nucleotide-binding</keyword>
<keyword id="KW-1185">Reference proteome</keyword>
<keyword id="KW-0808">Transferase</keyword>
<feature type="chain" id="PRO_0000145892" description="Phosphoglycerate kinase">
    <location>
        <begin position="1"/>
        <end position="417"/>
    </location>
</feature>
<feature type="binding site" evidence="3">
    <location>
        <position position="23"/>
    </location>
    <ligand>
        <name>(2R)-3-phosphoglycerate</name>
        <dbReference type="ChEBI" id="CHEBI:58272"/>
    </ligand>
</feature>
<feature type="binding site" evidence="5">
    <location>
        <position position="24"/>
    </location>
    <ligand>
        <name>(2R)-3-phosphoglycerate</name>
        <dbReference type="ChEBI" id="CHEBI:58272"/>
    </ligand>
</feature>
<feature type="binding site" evidence="3">
    <location>
        <position position="25"/>
    </location>
    <ligand>
        <name>(2R)-3-phosphoglycerate</name>
        <dbReference type="ChEBI" id="CHEBI:58272"/>
    </ligand>
</feature>
<feature type="binding site" evidence="5">
    <location>
        <position position="26"/>
    </location>
    <ligand>
        <name>(2R)-3-phosphoglycerate</name>
        <dbReference type="ChEBI" id="CHEBI:58272"/>
    </ligand>
</feature>
<feature type="binding site" evidence="3">
    <location>
        <position position="38"/>
    </location>
    <ligand>
        <name>(2R)-3-phosphoglycerate</name>
        <dbReference type="ChEBI" id="CHEBI:58272"/>
    </ligand>
</feature>
<feature type="binding site" evidence="5">
    <location>
        <position position="39"/>
    </location>
    <ligand>
        <name>(2R)-3-phosphoglycerate</name>
        <dbReference type="ChEBI" id="CHEBI:58272"/>
    </ligand>
</feature>
<feature type="binding site" evidence="3">
    <location>
        <position position="62"/>
    </location>
    <ligand>
        <name>(2R)-3-phosphoglycerate</name>
        <dbReference type="ChEBI" id="CHEBI:58272"/>
    </ligand>
</feature>
<feature type="binding site" evidence="5">
    <location>
        <position position="63"/>
    </location>
    <ligand>
        <name>(2R)-3-phosphoglycerate</name>
        <dbReference type="ChEBI" id="CHEBI:58272"/>
    </ligand>
</feature>
<feature type="binding site" evidence="3">
    <location>
        <position position="65"/>
    </location>
    <ligand>
        <name>(2R)-3-phosphoglycerate</name>
        <dbReference type="ChEBI" id="CHEBI:58272"/>
    </ligand>
</feature>
<feature type="binding site" evidence="5">
    <location>
        <position position="66"/>
    </location>
    <ligand>
        <name>(2R)-3-phosphoglycerate</name>
        <dbReference type="ChEBI" id="CHEBI:58272"/>
    </ligand>
</feature>
<feature type="binding site" evidence="3">
    <location>
        <position position="121"/>
    </location>
    <ligand>
        <name>(2R)-3-phosphoglycerate</name>
        <dbReference type="ChEBI" id="CHEBI:58272"/>
    </ligand>
</feature>
<feature type="binding site" evidence="5">
    <location>
        <position position="122"/>
    </location>
    <ligand>
        <name>(2R)-3-phosphoglycerate</name>
        <dbReference type="ChEBI" id="CHEBI:58272"/>
    </ligand>
</feature>
<feature type="binding site" evidence="3">
    <location>
        <position position="169"/>
    </location>
    <ligand>
        <name>(2R)-3-phosphoglycerate</name>
        <dbReference type="ChEBI" id="CHEBI:58272"/>
    </ligand>
</feature>
<feature type="binding site" evidence="5">
    <location>
        <position position="170"/>
    </location>
    <ligand>
        <name>(2R)-3-phosphoglycerate</name>
        <dbReference type="ChEBI" id="CHEBI:58272"/>
    </ligand>
</feature>
<feature type="binding site" evidence="3">
    <location>
        <position position="213"/>
    </location>
    <ligand>
        <name>ADP</name>
        <dbReference type="ChEBI" id="CHEBI:456216"/>
    </ligand>
</feature>
<feature type="binding site" evidence="3">
    <location>
        <position position="213"/>
    </location>
    <ligand>
        <name>CDP</name>
        <dbReference type="ChEBI" id="CHEBI:58069"/>
    </ligand>
</feature>
<feature type="binding site" evidence="5">
    <location>
        <position position="214"/>
    </location>
    <ligand>
        <name>AMP</name>
        <dbReference type="ChEBI" id="CHEBI:456215"/>
    </ligand>
</feature>
<feature type="binding site" evidence="5">
    <location>
        <position position="214"/>
    </location>
    <ligand>
        <name>ATP</name>
        <dbReference type="ChEBI" id="CHEBI:30616"/>
    </ligand>
</feature>
<feature type="binding site" evidence="3">
    <location>
        <position position="214"/>
    </location>
    <ligand>
        <name>Mg(2+)</name>
        <dbReference type="ChEBI" id="CHEBI:18420"/>
    </ligand>
</feature>
<feature type="binding site" evidence="5">
    <location>
        <position position="215"/>
    </location>
    <ligand>
        <name>AMP</name>
        <dbReference type="ChEBI" id="CHEBI:456215"/>
    </ligand>
</feature>
<feature type="binding site" evidence="3">
    <location>
        <position position="218"/>
    </location>
    <ligand>
        <name>CDP</name>
        <dbReference type="ChEBI" id="CHEBI:58069"/>
    </ligand>
</feature>
<feature type="binding site" evidence="3">
    <location>
        <position position="218"/>
    </location>
    <ligand>
        <name>Mg(2+)</name>
        <dbReference type="ChEBI" id="CHEBI:18420"/>
    </ligand>
</feature>
<feature type="binding site" evidence="5">
    <location>
        <position position="219"/>
    </location>
    <ligand>
        <name>AMP</name>
        <dbReference type="ChEBI" id="CHEBI:456215"/>
    </ligand>
</feature>
<feature type="binding site" evidence="5">
    <location>
        <position position="219"/>
    </location>
    <ligand>
        <name>ATP</name>
        <dbReference type="ChEBI" id="CHEBI:30616"/>
    </ligand>
</feature>
<feature type="binding site" evidence="3">
    <location>
        <position position="237"/>
    </location>
    <ligand>
        <name>ADP</name>
        <dbReference type="ChEBI" id="CHEBI:456216"/>
    </ligand>
</feature>
<feature type="binding site" evidence="3">
    <location>
        <position position="237"/>
    </location>
    <ligand>
        <name>CDP</name>
        <dbReference type="ChEBI" id="CHEBI:58069"/>
    </ligand>
</feature>
<feature type="binding site" evidence="5">
    <location>
        <position position="238"/>
    </location>
    <ligand>
        <name>AMP</name>
        <dbReference type="ChEBI" id="CHEBI:456215"/>
    </ligand>
</feature>
<feature type="binding site" evidence="5">
    <location>
        <position position="238"/>
    </location>
    <ligand>
        <name>ATP</name>
        <dbReference type="ChEBI" id="CHEBI:30616"/>
    </ligand>
</feature>
<feature type="binding site" evidence="5">
    <location>
        <position position="312"/>
    </location>
    <ligand>
        <name>AMP</name>
        <dbReference type="ChEBI" id="CHEBI:456215"/>
    </ligand>
</feature>
<feature type="binding site" evidence="5">
    <location>
        <position position="312"/>
    </location>
    <ligand>
        <name>ATP</name>
        <dbReference type="ChEBI" id="CHEBI:30616"/>
    </ligand>
</feature>
<feature type="binding site" evidence="3">
    <location>
        <position position="337"/>
    </location>
    <ligand>
        <name>CDP</name>
        <dbReference type="ChEBI" id="CHEBI:58069"/>
    </ligand>
</feature>
<feature type="binding site" evidence="3">
    <location>
        <position position="342"/>
    </location>
    <ligand>
        <name>ADP</name>
        <dbReference type="ChEBI" id="CHEBI:456216"/>
    </ligand>
</feature>
<feature type="binding site" evidence="3">
    <location>
        <position position="342"/>
    </location>
    <ligand>
        <name>CDP</name>
        <dbReference type="ChEBI" id="CHEBI:58069"/>
    </ligand>
</feature>
<feature type="binding site" evidence="5">
    <location>
        <position position="343"/>
    </location>
    <ligand>
        <name>AMP</name>
        <dbReference type="ChEBI" id="CHEBI:456215"/>
    </ligand>
</feature>
<feature type="binding site" evidence="5">
    <location>
        <position position="343"/>
    </location>
    <ligand>
        <name>ATP</name>
        <dbReference type="ChEBI" id="CHEBI:30616"/>
    </ligand>
</feature>
<feature type="binding site" evidence="5">
    <location>
        <position position="374"/>
    </location>
    <ligand>
        <name>ATP</name>
        <dbReference type="ChEBI" id="CHEBI:30616"/>
    </ligand>
</feature>
<feature type="binding site" evidence="5">
    <location>
        <position position="374"/>
    </location>
    <ligand>
        <name>Mg(2+)</name>
        <dbReference type="ChEBI" id="CHEBI:18420"/>
    </ligand>
</feature>
<feature type="binding site" evidence="5">
    <location>
        <position position="375"/>
    </location>
    <ligand>
        <name>ATP</name>
        <dbReference type="ChEBI" id="CHEBI:30616"/>
    </ligand>
</feature>
<gene>
    <name type="primary">PGK1</name>
    <name type="ordered locus">YALI0D12400g</name>
</gene>
<sequence length="417" mass="44772">MSLTNKLSIKDLDLKNKRVFIRVDFNVPLDGTTITNNQRIVAALPSIKYAIDQGAKAVILASHLGRPNGQRVEKYSLKPVQAELSKLLGKPVTFLDDCVGPKVEEEVSKAKDGEVILLENLRFHPEEEGSHKDADGKKIKADPAKVEEFRKSLTSLADVYVNDAFGTAHRAHSSMVGIELPQRAAGFLVAKELEFFAKALEHPERPFLAILGGAKVSDKIQLIDNLLDKVNALIIGGGMAFTFKKTLENVKIGNSLFDEDGSKIVAGLVEKAKKNNVKLVFPVDYVTADKFSKDAKVGHATDAEGIPDGWQGLDCGPKSIEEFQKVIGESKTILWNGPPGVFEFDNFAKGTKAVLDACVKAVDNGATVIIGGGDTATVAKKYGAEDKLSHVSTGGGASLELLEGKTLPGVAALSEKK</sequence>